<protein>
    <recommendedName>
        <fullName>Protein phosphatase 1E</fullName>
        <ecNumber>3.1.3.16</ecNumber>
    </recommendedName>
    <alternativeName>
        <fullName>Ca(2+)/calmodulin-dependent protein kinase phosphatase N</fullName>
        <shortName>CaMKP-N</shortName>
    </alternativeName>
    <alternativeName>
        <fullName>CaMKP-nucleus</fullName>
        <shortName>CaMKN</shortName>
    </alternativeName>
    <alternativeName>
        <fullName>Partner of PIX 1</fullName>
    </alternativeName>
    <alternativeName>
        <fullName>Partner of PIX-alpha</fullName>
        <shortName>Partner of PIXA</shortName>
    </alternativeName>
</protein>
<gene>
    <name type="primary">PPM1E</name>
    <name type="synonym">CAMKN</name>
    <name type="synonym">KIAA1072</name>
    <name type="synonym">POPX1</name>
</gene>
<accession>Q8WY54</accession>
<accession>A7E2X1</accession>
<accession>Q68DW1</accession>
<accession>Q7LAF3</accession>
<accession>Q9UPT0</accession>
<evidence type="ECO:0000250" key="1"/>
<evidence type="ECO:0000250" key="2">
    <source>
        <dbReference type="UniProtKB" id="Q80TL0"/>
    </source>
</evidence>
<evidence type="ECO:0000250" key="3">
    <source>
        <dbReference type="UniProtKB" id="Q80Z30"/>
    </source>
</evidence>
<evidence type="ECO:0000255" key="4">
    <source>
        <dbReference type="PROSITE-ProRule" id="PRU01082"/>
    </source>
</evidence>
<evidence type="ECO:0000256" key="5">
    <source>
        <dbReference type="SAM" id="MobiDB-lite"/>
    </source>
</evidence>
<evidence type="ECO:0000269" key="6">
    <source>
    </source>
</evidence>
<evidence type="ECO:0000269" key="7">
    <source>
    </source>
</evidence>
<evidence type="ECO:0000269" key="8">
    <source>
    </source>
</evidence>
<evidence type="ECO:0000269" key="9">
    <source>
    </source>
</evidence>
<evidence type="ECO:0000269" key="10">
    <source>
    </source>
</evidence>
<evidence type="ECO:0000269" key="11">
    <source>
    </source>
</evidence>
<evidence type="ECO:0000269" key="12">
    <source>
    </source>
</evidence>
<evidence type="ECO:0000269" key="13">
    <source>
    </source>
</evidence>
<evidence type="ECO:0000269" key="14">
    <source ref="2"/>
</evidence>
<evidence type="ECO:0000269" key="15">
    <source ref="7"/>
</evidence>
<evidence type="ECO:0000303" key="16">
    <source>
    </source>
</evidence>
<evidence type="ECO:0000305" key="17"/>
<comment type="function">
    <text evidence="1 7">Protein phosphatase that inactivates multifunctional CaM kinases such as CAMK4 and CAMK2 (By similarity). Dephosphorylates and inactivates PAK. May play a role in the inhibition of actin fiber stress breakdown and in morphological changes driven by TNK2/CDC42. Dephosphorylates PRKAA2 (By similarity).</text>
</comment>
<comment type="catalytic activity">
    <reaction>
        <text>O-phospho-L-seryl-[protein] + H2O = L-seryl-[protein] + phosphate</text>
        <dbReference type="Rhea" id="RHEA:20629"/>
        <dbReference type="Rhea" id="RHEA-COMP:9863"/>
        <dbReference type="Rhea" id="RHEA-COMP:11604"/>
        <dbReference type="ChEBI" id="CHEBI:15377"/>
        <dbReference type="ChEBI" id="CHEBI:29999"/>
        <dbReference type="ChEBI" id="CHEBI:43474"/>
        <dbReference type="ChEBI" id="CHEBI:83421"/>
        <dbReference type="EC" id="3.1.3.16"/>
    </reaction>
</comment>
<comment type="catalytic activity">
    <reaction>
        <text>O-phospho-L-threonyl-[protein] + H2O = L-threonyl-[protein] + phosphate</text>
        <dbReference type="Rhea" id="RHEA:47004"/>
        <dbReference type="Rhea" id="RHEA-COMP:11060"/>
        <dbReference type="Rhea" id="RHEA-COMP:11605"/>
        <dbReference type="ChEBI" id="CHEBI:15377"/>
        <dbReference type="ChEBI" id="CHEBI:30013"/>
        <dbReference type="ChEBI" id="CHEBI:43474"/>
        <dbReference type="ChEBI" id="CHEBI:61977"/>
        <dbReference type="EC" id="3.1.3.16"/>
    </reaction>
</comment>
<comment type="cofactor">
    <cofactor evidence="1">
        <name>Mg(2+)</name>
        <dbReference type="ChEBI" id="CHEBI:18420"/>
    </cofactor>
    <cofactor evidence="1">
        <name>Mn(2+)</name>
        <dbReference type="ChEBI" id="CHEBI:29035"/>
    </cofactor>
    <text evidence="1">Binds 2 magnesium or manganese ions per subunit.</text>
</comment>
<comment type="subunit">
    <text evidence="7">Heterotrimer. Interacts with PAX1 and ARHGEF6 (or ARHGEF7).</text>
</comment>
<comment type="subcellular location">
    <subcellularLocation>
        <location evidence="10 11">Nucleus</location>
    </subcellularLocation>
    <subcellularLocation>
        <location evidence="10 11">Cytoplasm</location>
    </subcellularLocation>
    <text evidence="10 11">A truncated form, major form, with the C-terminal part missing, is mostly found in the cytoplasm and a little in the nucleus. The full-length, minor form, is found in the nucleus.</text>
</comment>
<comment type="alternative products">
    <event type="alternative splicing"/>
    <isoform>
        <id>Q8WY54-2</id>
        <name>2</name>
        <sequence type="displayed"/>
    </isoform>
    <isoform>
        <id>Q8WY54-3</id>
        <name>3</name>
        <sequence type="described" ref="VSP_025198"/>
    </isoform>
</comment>
<comment type="polymorphism">
    <text>The poly-Pro-Glu stretch is polymorphic.</text>
</comment>
<comment type="similarity">
    <text evidence="17">Belongs to the PP2C family.</text>
</comment>
<comment type="sequence caution" evidence="17">
    <conflict type="miscellaneous discrepancy">
        <sequence resource="EMBL-CDS" id="AAF70325"/>
    </conflict>
    <text>Contains a 27 bp insertion which does not match the genome.</text>
</comment>
<comment type="sequence caution" evidence="17">
    <conflict type="erroneous initiation">
        <sequence resource="EMBL-CDS" id="BAA83024"/>
    </conflict>
    <text>Extended N-terminus.</text>
</comment>
<dbReference type="EC" id="3.1.3.16"/>
<dbReference type="EMBL" id="AF520614">
    <property type="protein sequence ID" value="AAM76058.1"/>
    <property type="molecule type" value="mRNA"/>
</dbReference>
<dbReference type="EMBL" id="AF260269">
    <property type="protein sequence ID" value="AAF70325.1"/>
    <property type="status" value="ALT_SEQ"/>
    <property type="molecule type" value="mRNA"/>
</dbReference>
<dbReference type="EMBL" id="AB028995">
    <property type="protein sequence ID" value="BAA83024.2"/>
    <property type="status" value="ALT_INIT"/>
    <property type="molecule type" value="mRNA"/>
</dbReference>
<dbReference type="EMBL" id="AK289966">
    <property type="protein sequence ID" value="BAF82655.1"/>
    <property type="molecule type" value="mRNA"/>
</dbReference>
<dbReference type="EMBL" id="CR749253">
    <property type="protein sequence ID" value="CAH18109.1"/>
    <property type="molecule type" value="mRNA"/>
</dbReference>
<dbReference type="EMBL" id="AC025521">
    <property type="status" value="NOT_ANNOTATED_CDS"/>
    <property type="molecule type" value="Genomic_DNA"/>
</dbReference>
<dbReference type="EMBL" id="AC100832">
    <property type="status" value="NOT_ANNOTATED_CDS"/>
    <property type="molecule type" value="Genomic_DNA"/>
</dbReference>
<dbReference type="EMBL" id="CH471109">
    <property type="protein sequence ID" value="EAW94429.1"/>
    <property type="molecule type" value="Genomic_DNA"/>
</dbReference>
<dbReference type="EMBL" id="BC136290">
    <property type="protein sequence ID" value="AAI36291.1"/>
    <property type="molecule type" value="mRNA"/>
</dbReference>
<dbReference type="EMBL" id="BC151228">
    <property type="protein sequence ID" value="AAI51229.1"/>
    <property type="molecule type" value="mRNA"/>
</dbReference>
<dbReference type="EMBL" id="DA497512">
    <property type="status" value="NOT_ANNOTATED_CDS"/>
    <property type="molecule type" value="mRNA"/>
</dbReference>
<dbReference type="EMBL" id="DA791319">
    <property type="status" value="NOT_ANNOTATED_CDS"/>
    <property type="molecule type" value="mRNA"/>
</dbReference>
<dbReference type="CCDS" id="CCDS11613.1">
    <molecule id="Q8WY54-2"/>
</dbReference>
<dbReference type="RefSeq" id="NP_055721.3">
    <molecule id="Q8WY54-2"/>
    <property type="nucleotide sequence ID" value="NM_014906.4"/>
</dbReference>
<dbReference type="RefSeq" id="XP_005257226.1">
    <property type="nucleotide sequence ID" value="XM_005257169.4"/>
</dbReference>
<dbReference type="RefSeq" id="XP_011522836.1">
    <property type="nucleotide sequence ID" value="XM_011524534.2"/>
</dbReference>
<dbReference type="RefSeq" id="XP_047291586.1">
    <molecule id="Q8WY54-3"/>
    <property type="nucleotide sequence ID" value="XM_047435630.1"/>
</dbReference>
<dbReference type="RefSeq" id="XP_054171467.1">
    <molecule id="Q8WY54-3"/>
    <property type="nucleotide sequence ID" value="XM_054315492.1"/>
</dbReference>
<dbReference type="SMR" id="Q8WY54"/>
<dbReference type="BioGRID" id="116515">
    <property type="interactions" value="54"/>
</dbReference>
<dbReference type="FunCoup" id="Q8WY54">
    <property type="interactions" value="754"/>
</dbReference>
<dbReference type="IntAct" id="Q8WY54">
    <property type="interactions" value="28"/>
</dbReference>
<dbReference type="MINT" id="Q8WY54"/>
<dbReference type="STRING" id="9606.ENSP00000312411"/>
<dbReference type="DEPOD" id="PPM1E"/>
<dbReference type="GlyGen" id="Q8WY54">
    <property type="glycosylation" value="1 site, 1 O-linked glycan (1 site)"/>
</dbReference>
<dbReference type="iPTMnet" id="Q8WY54"/>
<dbReference type="PhosphoSitePlus" id="Q8WY54"/>
<dbReference type="SwissPalm" id="Q8WY54"/>
<dbReference type="BioMuta" id="PPM1E"/>
<dbReference type="DMDM" id="311033412"/>
<dbReference type="jPOST" id="Q8WY54"/>
<dbReference type="MassIVE" id="Q8WY54"/>
<dbReference type="PaxDb" id="9606-ENSP00000312411"/>
<dbReference type="PeptideAtlas" id="Q8WY54"/>
<dbReference type="ProteomicsDB" id="75129">
    <molecule id="Q8WY54-2"/>
</dbReference>
<dbReference type="ProteomicsDB" id="75130">
    <molecule id="Q8WY54-3"/>
</dbReference>
<dbReference type="Pumba" id="Q8WY54"/>
<dbReference type="Antibodypedia" id="18444">
    <property type="antibodies" value="63 antibodies from 15 providers"/>
</dbReference>
<dbReference type="DNASU" id="22843"/>
<dbReference type="Ensembl" id="ENST00000308249.4">
    <molecule id="Q8WY54-2"/>
    <property type="protein sequence ID" value="ENSP00000312411.2"/>
    <property type="gene ID" value="ENSG00000175175.6"/>
</dbReference>
<dbReference type="GeneID" id="22843"/>
<dbReference type="KEGG" id="hsa:22843"/>
<dbReference type="MANE-Select" id="ENST00000308249.4">
    <property type="protein sequence ID" value="ENSP00000312411.2"/>
    <property type="RefSeq nucleotide sequence ID" value="NM_014906.5"/>
    <property type="RefSeq protein sequence ID" value="NP_055721.3"/>
</dbReference>
<dbReference type="UCSC" id="uc002iwx.5">
    <molecule id="Q8WY54-2"/>
    <property type="organism name" value="human"/>
</dbReference>
<dbReference type="AGR" id="HGNC:19322"/>
<dbReference type="CTD" id="22843"/>
<dbReference type="DisGeNET" id="22843"/>
<dbReference type="GeneCards" id="PPM1E"/>
<dbReference type="HGNC" id="HGNC:19322">
    <property type="gene designation" value="PPM1E"/>
</dbReference>
<dbReference type="HPA" id="ENSG00000175175">
    <property type="expression patterns" value="Tissue enhanced (brain, retina)"/>
</dbReference>
<dbReference type="MIM" id="619308">
    <property type="type" value="gene"/>
</dbReference>
<dbReference type="neXtProt" id="NX_Q8WY54"/>
<dbReference type="OpenTargets" id="ENSG00000175175"/>
<dbReference type="PharmGKB" id="PA134943567"/>
<dbReference type="VEuPathDB" id="HostDB:ENSG00000175175"/>
<dbReference type="eggNOG" id="KOG0698">
    <property type="taxonomic scope" value="Eukaryota"/>
</dbReference>
<dbReference type="GeneTree" id="ENSGT00940000157884"/>
<dbReference type="HOGENOM" id="CLU_013173_15_1_1"/>
<dbReference type="InParanoid" id="Q8WY54"/>
<dbReference type="OMA" id="SHLRYHY"/>
<dbReference type="OrthoDB" id="10264738at2759"/>
<dbReference type="PAN-GO" id="Q8WY54">
    <property type="GO annotations" value="3 GO annotations based on evolutionary models"/>
</dbReference>
<dbReference type="PhylomeDB" id="Q8WY54"/>
<dbReference type="TreeFam" id="TF317617"/>
<dbReference type="PathwayCommons" id="Q8WY54"/>
<dbReference type="Reactome" id="R-HSA-9617324">
    <property type="pathway name" value="Negative regulation of NMDA receptor-mediated neuronal transmission"/>
</dbReference>
<dbReference type="SignaLink" id="Q8WY54"/>
<dbReference type="SIGNOR" id="Q8WY54"/>
<dbReference type="BioGRID-ORCS" id="22843">
    <property type="hits" value="209 hits in 1167 CRISPR screens"/>
</dbReference>
<dbReference type="ChiTaRS" id="PPM1E">
    <property type="organism name" value="human"/>
</dbReference>
<dbReference type="GenomeRNAi" id="22843"/>
<dbReference type="Pharos" id="Q8WY54">
    <property type="development level" value="Tbio"/>
</dbReference>
<dbReference type="PRO" id="PR:Q8WY54"/>
<dbReference type="Proteomes" id="UP000005640">
    <property type="component" value="Chromosome 17"/>
</dbReference>
<dbReference type="RNAct" id="Q8WY54">
    <property type="molecule type" value="protein"/>
</dbReference>
<dbReference type="Bgee" id="ENSG00000175175">
    <property type="expression patterns" value="Expressed in endothelial cell and 125 other cell types or tissues"/>
</dbReference>
<dbReference type="GO" id="GO:0005737">
    <property type="term" value="C:cytoplasm"/>
    <property type="evidence" value="ECO:0007669"/>
    <property type="project" value="UniProtKB-SubCell"/>
</dbReference>
<dbReference type="GO" id="GO:0005730">
    <property type="term" value="C:nucleolus"/>
    <property type="evidence" value="ECO:0000314"/>
    <property type="project" value="HPA"/>
</dbReference>
<dbReference type="GO" id="GO:0005654">
    <property type="term" value="C:nucleoplasm"/>
    <property type="evidence" value="ECO:0000314"/>
    <property type="project" value="HPA"/>
</dbReference>
<dbReference type="GO" id="GO:0005634">
    <property type="term" value="C:nucleus"/>
    <property type="evidence" value="ECO:0000318"/>
    <property type="project" value="GO_Central"/>
</dbReference>
<dbReference type="GO" id="GO:0032991">
    <property type="term" value="C:protein-containing complex"/>
    <property type="evidence" value="ECO:0000314"/>
    <property type="project" value="UniProtKB"/>
</dbReference>
<dbReference type="GO" id="GO:0046872">
    <property type="term" value="F:metal ion binding"/>
    <property type="evidence" value="ECO:0007669"/>
    <property type="project" value="UniProtKB-KW"/>
</dbReference>
<dbReference type="GO" id="GO:0004722">
    <property type="term" value="F:protein serine/threonine phosphatase activity"/>
    <property type="evidence" value="ECO:0000314"/>
    <property type="project" value="UniProtKB"/>
</dbReference>
<dbReference type="GO" id="GO:0071222">
    <property type="term" value="P:cellular response to lipopolysaccharide"/>
    <property type="evidence" value="ECO:0000315"/>
    <property type="project" value="BHF-UCL"/>
</dbReference>
<dbReference type="GO" id="GO:0071466">
    <property type="term" value="P:cellular response to xenobiotic stimulus"/>
    <property type="evidence" value="ECO:0000314"/>
    <property type="project" value="UniProtKB"/>
</dbReference>
<dbReference type="GO" id="GO:0006469">
    <property type="term" value="P:negative regulation of protein kinase activity"/>
    <property type="evidence" value="ECO:0000314"/>
    <property type="project" value="UniProtKB"/>
</dbReference>
<dbReference type="GO" id="GO:0035970">
    <property type="term" value="P:peptidyl-threonine dephosphorylation"/>
    <property type="evidence" value="ECO:0000314"/>
    <property type="project" value="UniProtKB"/>
</dbReference>
<dbReference type="GO" id="GO:0051496">
    <property type="term" value="P:positive regulation of stress fiber assembly"/>
    <property type="evidence" value="ECO:0000314"/>
    <property type="project" value="UniProtKB"/>
</dbReference>
<dbReference type="GO" id="GO:0007165">
    <property type="term" value="P:signal transduction"/>
    <property type="evidence" value="ECO:0000318"/>
    <property type="project" value="GO_Central"/>
</dbReference>
<dbReference type="CDD" id="cd00143">
    <property type="entry name" value="PP2Cc"/>
    <property type="match status" value="1"/>
</dbReference>
<dbReference type="FunFam" id="3.60.40.10:FF:000021">
    <property type="entry name" value="Protein phosphatase, Mg2+/Mn2+-dependent, 1E"/>
    <property type="match status" value="1"/>
</dbReference>
<dbReference type="Gene3D" id="3.60.40.10">
    <property type="entry name" value="PPM-type phosphatase domain"/>
    <property type="match status" value="1"/>
</dbReference>
<dbReference type="InterPro" id="IPR015655">
    <property type="entry name" value="PP2C"/>
</dbReference>
<dbReference type="InterPro" id="IPR000222">
    <property type="entry name" value="PP2C_BS"/>
</dbReference>
<dbReference type="InterPro" id="IPR036457">
    <property type="entry name" value="PPM-type-like_dom_sf"/>
</dbReference>
<dbReference type="InterPro" id="IPR001932">
    <property type="entry name" value="PPM-type_phosphatase-like_dom"/>
</dbReference>
<dbReference type="PANTHER" id="PTHR13832:SF535">
    <property type="entry name" value="PROTEIN PHOSPHATASE 1E"/>
    <property type="match status" value="1"/>
</dbReference>
<dbReference type="PANTHER" id="PTHR13832">
    <property type="entry name" value="PROTEIN PHOSPHATASE 2C"/>
    <property type="match status" value="1"/>
</dbReference>
<dbReference type="Pfam" id="PF00481">
    <property type="entry name" value="PP2C"/>
    <property type="match status" value="1"/>
</dbReference>
<dbReference type="SMART" id="SM00332">
    <property type="entry name" value="PP2Cc"/>
    <property type="match status" value="1"/>
</dbReference>
<dbReference type="SUPFAM" id="SSF81606">
    <property type="entry name" value="PP2C-like"/>
    <property type="match status" value="1"/>
</dbReference>
<dbReference type="PROSITE" id="PS01032">
    <property type="entry name" value="PPM_1"/>
    <property type="match status" value="1"/>
</dbReference>
<dbReference type="PROSITE" id="PS51746">
    <property type="entry name" value="PPM_2"/>
    <property type="match status" value="1"/>
</dbReference>
<name>PPM1E_HUMAN</name>
<keyword id="KW-0025">Alternative splicing</keyword>
<keyword id="KW-0963">Cytoplasm</keyword>
<keyword id="KW-0378">Hydrolase</keyword>
<keyword id="KW-0460">Magnesium</keyword>
<keyword id="KW-0464">Manganese</keyword>
<keyword id="KW-0479">Metal-binding</keyword>
<keyword id="KW-0539">Nucleus</keyword>
<keyword id="KW-0597">Phosphoprotein</keyword>
<keyword id="KW-0904">Protein phosphatase</keyword>
<keyword id="KW-1267">Proteomics identification</keyword>
<keyword id="KW-1185">Reference proteome</keyword>
<keyword id="KW-0677">Repeat</keyword>
<proteinExistence type="evidence at protein level"/>
<reference key="1">
    <citation type="journal article" date="2002" name="Curr. Biol.">
        <title>The p21-activated kinase PAK is negatively regulated by POPX1 and POPX2, a pair of serine/threonine phosphatases of the PP2C family.</title>
        <authorList>
            <person name="Koh C.-G."/>
            <person name="Tan E.-J."/>
            <person name="Manser E."/>
            <person name="Lim L."/>
        </authorList>
    </citation>
    <scope>NUCLEOTIDE SEQUENCE [MRNA] (ISOFORM 2)</scope>
    <scope>FUNCTION</scope>
    <scope>INTERACTION WITH ARHGEF</scope>
    <scope>VARIANT PRO-GLU-44 INS</scope>
</reference>
<reference key="2">
    <citation type="submission" date="2000-04" db="EMBL/GenBank/DDBJ databases">
        <title>Five novel genes from 17q23 amplicon have different amplification and overexpression frequency in breast cancer.</title>
        <authorList>
            <person name="Wu G."/>
            <person name="Couch F.J."/>
        </authorList>
    </citation>
    <scope>NUCLEOTIDE SEQUENCE [MRNA] (ISOFORM 2)</scope>
    <scope>VARIANT PRO-GLU-44 INS</scope>
</reference>
<reference key="3">
    <citation type="journal article" date="1999" name="DNA Res.">
        <title>Prediction of the coding sequences of unidentified human genes. XIV. The complete sequences of 100 new cDNA clones from brain which code for large proteins in vitro.</title>
        <authorList>
            <person name="Kikuno R."/>
            <person name="Nagase T."/>
            <person name="Ishikawa K."/>
            <person name="Hirosawa M."/>
            <person name="Miyajima N."/>
            <person name="Tanaka A."/>
            <person name="Kotani H."/>
            <person name="Nomura N."/>
            <person name="Ohara O."/>
        </authorList>
    </citation>
    <scope>NUCLEOTIDE SEQUENCE [LARGE SCALE MRNA] (ISOFORM 2)</scope>
    <scope>VARIANT PRO-GLU-44 INS</scope>
    <source>
        <tissue>Brain</tissue>
    </source>
</reference>
<reference key="4">
    <citation type="journal article" date="2004" name="Nat. Genet.">
        <title>Complete sequencing and characterization of 21,243 full-length human cDNAs.</title>
        <authorList>
            <person name="Ota T."/>
            <person name="Suzuki Y."/>
            <person name="Nishikawa T."/>
            <person name="Otsuki T."/>
            <person name="Sugiyama T."/>
            <person name="Irie R."/>
            <person name="Wakamatsu A."/>
            <person name="Hayashi K."/>
            <person name="Sato H."/>
            <person name="Nagai K."/>
            <person name="Kimura K."/>
            <person name="Makita H."/>
            <person name="Sekine M."/>
            <person name="Obayashi M."/>
            <person name="Nishi T."/>
            <person name="Shibahara T."/>
            <person name="Tanaka T."/>
            <person name="Ishii S."/>
            <person name="Yamamoto J."/>
            <person name="Saito K."/>
            <person name="Kawai Y."/>
            <person name="Isono Y."/>
            <person name="Nakamura Y."/>
            <person name="Nagahari K."/>
            <person name="Murakami K."/>
            <person name="Yasuda T."/>
            <person name="Iwayanagi T."/>
            <person name="Wagatsuma M."/>
            <person name="Shiratori A."/>
            <person name="Sudo H."/>
            <person name="Hosoiri T."/>
            <person name="Kaku Y."/>
            <person name="Kodaira H."/>
            <person name="Kondo H."/>
            <person name="Sugawara M."/>
            <person name="Takahashi M."/>
            <person name="Kanda K."/>
            <person name="Yokoi T."/>
            <person name="Furuya T."/>
            <person name="Kikkawa E."/>
            <person name="Omura Y."/>
            <person name="Abe K."/>
            <person name="Kamihara K."/>
            <person name="Katsuta N."/>
            <person name="Sato K."/>
            <person name="Tanikawa M."/>
            <person name="Yamazaki M."/>
            <person name="Ninomiya K."/>
            <person name="Ishibashi T."/>
            <person name="Yamashita H."/>
            <person name="Murakawa K."/>
            <person name="Fujimori K."/>
            <person name="Tanai H."/>
            <person name="Kimata M."/>
            <person name="Watanabe M."/>
            <person name="Hiraoka S."/>
            <person name="Chiba Y."/>
            <person name="Ishida S."/>
            <person name="Ono Y."/>
            <person name="Takiguchi S."/>
            <person name="Watanabe S."/>
            <person name="Yosida M."/>
            <person name="Hotuta T."/>
            <person name="Kusano J."/>
            <person name="Kanehori K."/>
            <person name="Takahashi-Fujii A."/>
            <person name="Hara H."/>
            <person name="Tanase T.-O."/>
            <person name="Nomura Y."/>
            <person name="Togiya S."/>
            <person name="Komai F."/>
            <person name="Hara R."/>
            <person name="Takeuchi K."/>
            <person name="Arita M."/>
            <person name="Imose N."/>
            <person name="Musashino K."/>
            <person name="Yuuki H."/>
            <person name="Oshima A."/>
            <person name="Sasaki N."/>
            <person name="Aotsuka S."/>
            <person name="Yoshikawa Y."/>
            <person name="Matsunawa H."/>
            <person name="Ichihara T."/>
            <person name="Shiohata N."/>
            <person name="Sano S."/>
            <person name="Moriya S."/>
            <person name="Momiyama H."/>
            <person name="Satoh N."/>
            <person name="Takami S."/>
            <person name="Terashima Y."/>
            <person name="Suzuki O."/>
            <person name="Nakagawa S."/>
            <person name="Senoh A."/>
            <person name="Mizoguchi H."/>
            <person name="Goto Y."/>
            <person name="Shimizu F."/>
            <person name="Wakebe H."/>
            <person name="Hishigaki H."/>
            <person name="Watanabe T."/>
            <person name="Sugiyama A."/>
            <person name="Takemoto M."/>
            <person name="Kawakami B."/>
            <person name="Yamazaki M."/>
            <person name="Watanabe K."/>
            <person name="Kumagai A."/>
            <person name="Itakura S."/>
            <person name="Fukuzumi Y."/>
            <person name="Fujimori Y."/>
            <person name="Komiyama M."/>
            <person name="Tashiro H."/>
            <person name="Tanigami A."/>
            <person name="Fujiwara T."/>
            <person name="Ono T."/>
            <person name="Yamada K."/>
            <person name="Fujii Y."/>
            <person name="Ozaki K."/>
            <person name="Hirao M."/>
            <person name="Ohmori Y."/>
            <person name="Kawabata A."/>
            <person name="Hikiji T."/>
            <person name="Kobatake N."/>
            <person name="Inagaki H."/>
            <person name="Ikema Y."/>
            <person name="Okamoto S."/>
            <person name="Okitani R."/>
            <person name="Kawakami T."/>
            <person name="Noguchi S."/>
            <person name="Itoh T."/>
            <person name="Shigeta K."/>
            <person name="Senba T."/>
            <person name="Matsumura K."/>
            <person name="Nakajima Y."/>
            <person name="Mizuno T."/>
            <person name="Morinaga M."/>
            <person name="Sasaki M."/>
            <person name="Togashi T."/>
            <person name="Oyama M."/>
            <person name="Hata H."/>
            <person name="Watanabe M."/>
            <person name="Komatsu T."/>
            <person name="Mizushima-Sugano J."/>
            <person name="Satoh T."/>
            <person name="Shirai Y."/>
            <person name="Takahashi Y."/>
            <person name="Nakagawa K."/>
            <person name="Okumura K."/>
            <person name="Nagase T."/>
            <person name="Nomura N."/>
            <person name="Kikuchi H."/>
            <person name="Masuho Y."/>
            <person name="Yamashita R."/>
            <person name="Nakai K."/>
            <person name="Yada T."/>
            <person name="Nakamura Y."/>
            <person name="Ohara O."/>
            <person name="Isogai T."/>
            <person name="Sugano S."/>
        </authorList>
    </citation>
    <scope>NUCLEOTIDE SEQUENCE [LARGE SCALE MRNA] (ISOFORM 2)</scope>
    <scope>VARIANT PRO-GLU-44 INS</scope>
    <source>
        <tissue>Hippocampus</tissue>
    </source>
</reference>
<reference key="5">
    <citation type="journal article" date="2007" name="BMC Genomics">
        <title>The full-ORF clone resource of the German cDNA consortium.</title>
        <authorList>
            <person name="Bechtel S."/>
            <person name="Rosenfelder H."/>
            <person name="Duda A."/>
            <person name="Schmidt C.P."/>
            <person name="Ernst U."/>
            <person name="Wellenreuther R."/>
            <person name="Mehrle A."/>
            <person name="Schuster C."/>
            <person name="Bahr A."/>
            <person name="Bloecker H."/>
            <person name="Heubner D."/>
            <person name="Hoerlein A."/>
            <person name="Michel G."/>
            <person name="Wedler H."/>
            <person name="Koehrer K."/>
            <person name="Ottenwaelder B."/>
            <person name="Poustka A."/>
            <person name="Wiemann S."/>
            <person name="Schupp I."/>
        </authorList>
    </citation>
    <scope>NUCLEOTIDE SEQUENCE [LARGE SCALE MRNA] (ISOFORM 3)</scope>
    <source>
        <tissue>Testis</tissue>
    </source>
</reference>
<reference key="6">
    <citation type="journal article" date="2006" name="Nature">
        <title>DNA sequence of human chromosome 17 and analysis of rearrangement in the human lineage.</title>
        <authorList>
            <person name="Zody M.C."/>
            <person name="Garber M."/>
            <person name="Adams D.J."/>
            <person name="Sharpe T."/>
            <person name="Harrow J."/>
            <person name="Lupski J.R."/>
            <person name="Nicholson C."/>
            <person name="Searle S.M."/>
            <person name="Wilming L."/>
            <person name="Young S.K."/>
            <person name="Abouelleil A."/>
            <person name="Allen N.R."/>
            <person name="Bi W."/>
            <person name="Bloom T."/>
            <person name="Borowsky M.L."/>
            <person name="Bugalter B.E."/>
            <person name="Butler J."/>
            <person name="Chang J.L."/>
            <person name="Chen C.-K."/>
            <person name="Cook A."/>
            <person name="Corum B."/>
            <person name="Cuomo C.A."/>
            <person name="de Jong P.J."/>
            <person name="DeCaprio D."/>
            <person name="Dewar K."/>
            <person name="FitzGerald M."/>
            <person name="Gilbert J."/>
            <person name="Gibson R."/>
            <person name="Gnerre S."/>
            <person name="Goldstein S."/>
            <person name="Grafham D.V."/>
            <person name="Grocock R."/>
            <person name="Hafez N."/>
            <person name="Hagopian D.S."/>
            <person name="Hart E."/>
            <person name="Norman C.H."/>
            <person name="Humphray S."/>
            <person name="Jaffe D.B."/>
            <person name="Jones M."/>
            <person name="Kamal M."/>
            <person name="Khodiyar V.K."/>
            <person name="LaButti K."/>
            <person name="Laird G."/>
            <person name="Lehoczky J."/>
            <person name="Liu X."/>
            <person name="Lokyitsang T."/>
            <person name="Loveland J."/>
            <person name="Lui A."/>
            <person name="Macdonald P."/>
            <person name="Major J.E."/>
            <person name="Matthews L."/>
            <person name="Mauceli E."/>
            <person name="McCarroll S.A."/>
            <person name="Mihalev A.H."/>
            <person name="Mudge J."/>
            <person name="Nguyen C."/>
            <person name="Nicol R."/>
            <person name="O'Leary S.B."/>
            <person name="Osoegawa K."/>
            <person name="Schwartz D.C."/>
            <person name="Shaw-Smith C."/>
            <person name="Stankiewicz P."/>
            <person name="Steward C."/>
            <person name="Swarbreck D."/>
            <person name="Venkataraman V."/>
            <person name="Whittaker C.A."/>
            <person name="Yang X."/>
            <person name="Zimmer A.R."/>
            <person name="Bradley A."/>
            <person name="Hubbard T."/>
            <person name="Birren B.W."/>
            <person name="Rogers J."/>
            <person name="Lander E.S."/>
            <person name="Nusbaum C."/>
        </authorList>
    </citation>
    <scope>NUCLEOTIDE SEQUENCE [LARGE SCALE GENOMIC DNA]</scope>
</reference>
<reference key="7">
    <citation type="submission" date="2005-09" db="EMBL/GenBank/DDBJ databases">
        <authorList>
            <person name="Mural R.J."/>
            <person name="Istrail S."/>
            <person name="Sutton G.G."/>
            <person name="Florea L."/>
            <person name="Halpern A.L."/>
            <person name="Mobarry C.M."/>
            <person name="Lippert R."/>
            <person name="Walenz B."/>
            <person name="Shatkay H."/>
            <person name="Dew I."/>
            <person name="Miller J.R."/>
            <person name="Flanigan M.J."/>
            <person name="Edwards N.J."/>
            <person name="Bolanos R."/>
            <person name="Fasulo D."/>
            <person name="Halldorsson B.V."/>
            <person name="Hannenhalli S."/>
            <person name="Turner R."/>
            <person name="Yooseph S."/>
            <person name="Lu F."/>
            <person name="Nusskern D.R."/>
            <person name="Shue B.C."/>
            <person name="Zheng X.H."/>
            <person name="Zhong F."/>
            <person name="Delcher A.L."/>
            <person name="Huson D.H."/>
            <person name="Kravitz S.A."/>
            <person name="Mouchard L."/>
            <person name="Reinert K."/>
            <person name="Remington K.A."/>
            <person name="Clark A.G."/>
            <person name="Waterman M.S."/>
            <person name="Eichler E.E."/>
            <person name="Adams M.D."/>
            <person name="Hunkapiller M.W."/>
            <person name="Myers E.W."/>
            <person name="Venter J.C."/>
        </authorList>
    </citation>
    <scope>NUCLEOTIDE SEQUENCE [LARGE SCALE GENOMIC DNA]</scope>
    <scope>VARIANT PRO-GLU-44 INS</scope>
</reference>
<reference key="8">
    <citation type="journal article" date="2004" name="Genome Res.">
        <title>The status, quality, and expansion of the NIH full-length cDNA project: the Mammalian Gene Collection (MGC).</title>
        <authorList>
            <consortium name="The MGC Project Team"/>
        </authorList>
    </citation>
    <scope>NUCLEOTIDE SEQUENCE [LARGE SCALE MRNA] (ISOFORM 2)</scope>
    <scope>VARIANT PRO-GLU-44 INS</scope>
    <source>
        <tissue>Brain</tissue>
    </source>
</reference>
<reference key="9">
    <citation type="journal article" date="2006" name="Genome Res.">
        <title>Diversification of transcriptional modulation: large-scale identification and characterization of putative alternative promoters of human genes.</title>
        <authorList>
            <person name="Kimura K."/>
            <person name="Wakamatsu A."/>
            <person name="Suzuki Y."/>
            <person name="Ota T."/>
            <person name="Nishikawa T."/>
            <person name="Yamashita R."/>
            <person name="Yamamoto J."/>
            <person name="Sekine M."/>
            <person name="Tsuritani K."/>
            <person name="Wakaguri H."/>
            <person name="Ishii S."/>
            <person name="Sugiyama T."/>
            <person name="Saito K."/>
            <person name="Isono Y."/>
            <person name="Irie R."/>
            <person name="Kushida N."/>
            <person name="Yoneyama T."/>
            <person name="Otsuka R."/>
            <person name="Kanda K."/>
            <person name="Yokoi T."/>
            <person name="Kondo H."/>
            <person name="Wagatsuma M."/>
            <person name="Murakawa K."/>
            <person name="Ishida S."/>
            <person name="Ishibashi T."/>
            <person name="Takahashi-Fujii A."/>
            <person name="Tanase T."/>
            <person name="Nagai K."/>
            <person name="Kikuchi H."/>
            <person name="Nakai K."/>
            <person name="Isogai T."/>
            <person name="Sugano S."/>
        </authorList>
    </citation>
    <scope>NUCLEOTIDE SEQUENCE [LARGE SCALE MRNA] OF 1-112 (ISOFORM 2)</scope>
</reference>
<reference key="10">
    <citation type="journal article" date="2004" name="J. Biochem.">
        <title>Identification and characterization of nuclear localization signals of CaMKP-N.</title>
        <authorList>
            <person name="Takeuchi M."/>
            <person name="Taniguchi T."/>
            <person name="Fujisawa H."/>
        </authorList>
    </citation>
    <scope>SUBCELLULAR LOCATION</scope>
</reference>
<reference key="11">
    <citation type="journal article" date="2006" name="J. Neurochem.">
        <title>Post-translational excision of the carboxyl-terminal segment of CaM kinase phosphatase N and its cytosolic occurrence in the brain.</title>
        <authorList>
            <person name="Kitani T."/>
            <person name="Okuno S."/>
            <person name="Nakamura Y."/>
            <person name="Tokuno H."/>
            <person name="Takeuchi M."/>
            <person name="Fujisawa H."/>
        </authorList>
    </citation>
    <scope>SUBCELLULAR LOCATION</scope>
</reference>
<reference key="12">
    <citation type="journal article" date="2013" name="J. Proteome Res.">
        <title>Toward a comprehensive characterization of a human cancer cell phosphoproteome.</title>
        <authorList>
            <person name="Zhou H."/>
            <person name="Di Palma S."/>
            <person name="Preisinger C."/>
            <person name="Peng M."/>
            <person name="Polat A.N."/>
            <person name="Heck A.J."/>
            <person name="Mohammed S."/>
        </authorList>
    </citation>
    <scope>IDENTIFICATION BY MASS SPECTROMETRY [LARGE SCALE ANALYSIS]</scope>
    <source>
        <tissue>Erythroleukemia</tissue>
    </source>
</reference>
<reference key="13">
    <citation type="journal article" date="2006" name="Science">
        <title>The consensus coding sequences of human breast and colorectal cancers.</title>
        <authorList>
            <person name="Sjoeblom T."/>
            <person name="Jones S."/>
            <person name="Wood L.D."/>
            <person name="Parsons D.W."/>
            <person name="Lin J."/>
            <person name="Barber T.D."/>
            <person name="Mandelker D."/>
            <person name="Leary R.J."/>
            <person name="Ptak J."/>
            <person name="Silliman N."/>
            <person name="Szabo S."/>
            <person name="Buckhaults P."/>
            <person name="Farrell C."/>
            <person name="Meeh P."/>
            <person name="Markowitz S.D."/>
            <person name="Willis J."/>
            <person name="Dawson D."/>
            <person name="Willson J.K.V."/>
            <person name="Gazdar A.F."/>
            <person name="Hartigan J."/>
            <person name="Wu L."/>
            <person name="Liu C."/>
            <person name="Parmigiani G."/>
            <person name="Park B.H."/>
            <person name="Bachman K.E."/>
            <person name="Papadopoulos N."/>
            <person name="Vogelstein B."/>
            <person name="Kinzler K.W."/>
            <person name="Velculescu V.E."/>
        </authorList>
    </citation>
    <scope>VARIANTS [LARGE SCALE ANALYSIS] SER-222 AND GLY-311</scope>
</reference>
<organism>
    <name type="scientific">Homo sapiens</name>
    <name type="common">Human</name>
    <dbReference type="NCBI Taxonomy" id="9606"/>
    <lineage>
        <taxon>Eukaryota</taxon>
        <taxon>Metazoa</taxon>
        <taxon>Chordata</taxon>
        <taxon>Craniata</taxon>
        <taxon>Vertebrata</taxon>
        <taxon>Euteleostomi</taxon>
        <taxon>Mammalia</taxon>
        <taxon>Eutheria</taxon>
        <taxon>Euarchontoglires</taxon>
        <taxon>Primates</taxon>
        <taxon>Haplorrhini</taxon>
        <taxon>Catarrhini</taxon>
        <taxon>Hominidae</taxon>
        <taxon>Homo</taxon>
    </lineage>
</organism>
<sequence>MAGCIPEEKTYRRFLELFLGEFRGPCGGGEPEPEPEPEPEPEPESEPEPEPELVEAEAAEASVEEPGEEAATVAATEEGDQEQDPEPEEEAAVEGEEEEEGAATAAAAPGHSAVPPPPPQLPPLPPLPRPLSERITREEVEGESLDLCLQQLYKYNCPSFLAAALARATSDEVLQSDLSAHYIPKETDGTEGTVEIETVKLARSVFSKLHEICCSWVKDFPLRRRPQLYYETSIHAIKNMRRKMEDKHVCIPDFNMLFNLEDQEEQAYFAVFDGHGGVDAAIYASIHLHVNLVRQEMFPHDPAEALCRAFRVTDERFVQKAARESLRCGTTGVVTFIRGNMLHVAWVGDSQVMLVRKGQAVELMKPHKPDREDEKQRIEALGGCVVWFGAWRVNGSLSVSRAIGDAEHKPYICGDADSASTVLDGTEDYLILACDGFYDTVNPDEAVKVVSDHLKENNGDSSMVAHKLVASARDAGSSDNITVIVVFLRDMNKAVNVSEESDWTENSFQGGQEDGGDDKENHGECKRPWPQHQCSAPADLGYDGRVDSFTDRTSLSPGSQINVLEDPGYLDLTQIEASKPHSAQFLLPVEMFGPGAPKKANLINELMMEKKSVQSSLPEWSGAGEFPTAFNLGSTGEQIYRMQSLSPVCSGLENEQFKSPGNRVSRLSHLRHHYSKKWHRFRFNPKFYSFLSAQEPSHKIGTSLSSLTGSGKRNRIRSSLPWRQNSWKGYSENMRKLRKTHDIPCPDLPWSYKIE</sequence>
<feature type="chain" id="PRO_0000286820" description="Protein phosphatase 1E">
    <location>
        <begin position="1"/>
        <end position="755"/>
    </location>
</feature>
<feature type="repeat" description="1">
    <location>
        <begin position="31"/>
        <end position="32"/>
    </location>
</feature>
<feature type="repeat" description="2">
    <location>
        <begin position="33"/>
        <end position="34"/>
    </location>
</feature>
<feature type="repeat" description="3">
    <location>
        <begin position="35"/>
        <end position="36"/>
    </location>
</feature>
<feature type="repeat" description="4">
    <location>
        <begin position="37"/>
        <end position="38"/>
    </location>
</feature>
<feature type="repeat" description="5">
    <location>
        <begin position="39"/>
        <end position="40"/>
    </location>
</feature>
<feature type="repeat" description="6">
    <location>
        <begin position="41"/>
        <end position="42"/>
    </location>
</feature>
<feature type="repeat" description="7">
    <location>
        <begin position="43"/>
        <end position="44"/>
    </location>
</feature>
<feature type="repeat" description="8; approximate">
    <location>
        <begin position="45"/>
        <end position="46"/>
    </location>
</feature>
<feature type="repeat" description="9">
    <location>
        <begin position="47"/>
        <end position="48"/>
    </location>
</feature>
<feature type="repeat" description="10">
    <location>
        <begin position="49"/>
        <end position="50"/>
    </location>
</feature>
<feature type="repeat" description="11">
    <location>
        <begin position="51"/>
        <end position="52"/>
    </location>
</feature>
<feature type="domain" description="PPM-type phosphatase" evidence="4">
    <location>
        <begin position="231"/>
        <end position="488"/>
    </location>
</feature>
<feature type="region of interest" description="Disordered" evidence="5">
    <location>
        <begin position="21"/>
        <end position="131"/>
    </location>
</feature>
<feature type="region of interest" description="11 X 2 AA tandem repeats of P-E">
    <location>
        <begin position="31"/>
        <end position="52"/>
    </location>
</feature>
<feature type="region of interest" description="Disordered" evidence="5">
    <location>
        <begin position="498"/>
        <end position="537"/>
    </location>
</feature>
<feature type="compositionally biased region" description="Acidic residues" evidence="5">
    <location>
        <begin position="31"/>
        <end position="68"/>
    </location>
</feature>
<feature type="compositionally biased region" description="Acidic residues" evidence="5">
    <location>
        <begin position="77"/>
        <end position="101"/>
    </location>
</feature>
<feature type="compositionally biased region" description="Low complexity" evidence="5">
    <location>
        <begin position="102"/>
        <end position="113"/>
    </location>
</feature>
<feature type="compositionally biased region" description="Pro residues" evidence="5">
    <location>
        <begin position="114"/>
        <end position="129"/>
    </location>
</feature>
<feature type="compositionally biased region" description="Basic and acidic residues" evidence="5">
    <location>
        <begin position="518"/>
        <end position="527"/>
    </location>
</feature>
<feature type="binding site" evidence="1">
    <location>
        <position position="273"/>
    </location>
    <ligand>
        <name>Mn(2+)</name>
        <dbReference type="ChEBI" id="CHEBI:29035"/>
        <label>1</label>
    </ligand>
</feature>
<feature type="binding site" evidence="1">
    <location>
        <position position="273"/>
    </location>
    <ligand>
        <name>Mn(2+)</name>
        <dbReference type="ChEBI" id="CHEBI:29035"/>
        <label>2</label>
    </ligand>
</feature>
<feature type="binding site" evidence="1">
    <location>
        <position position="274"/>
    </location>
    <ligand>
        <name>Mn(2+)</name>
        <dbReference type="ChEBI" id="CHEBI:29035"/>
        <label>1</label>
    </ligand>
</feature>
<feature type="binding site" evidence="1">
    <location>
        <position position="435"/>
    </location>
    <ligand>
        <name>Mn(2+)</name>
        <dbReference type="ChEBI" id="CHEBI:29035"/>
        <label>2</label>
    </ligand>
</feature>
<feature type="binding site" evidence="1">
    <location>
        <position position="479"/>
    </location>
    <ligand>
        <name>Mn(2+)</name>
        <dbReference type="ChEBI" id="CHEBI:29035"/>
        <label>2</label>
    </ligand>
</feature>
<feature type="modified residue" description="Phosphoserine" evidence="2">
    <location>
        <position position="535"/>
    </location>
</feature>
<feature type="modified residue" description="Phosphoserine" evidence="3">
    <location>
        <position position="548"/>
    </location>
</feature>
<feature type="splice variant" id="VSP_025198" description="In isoform 3." evidence="16">
    <original>MAGCIPEEKTYRRFLELFLGEFRGPCGGGEPEPEPEPEPEPEPESEPEPEPELVEAEAAEASVEEPGEEAATVAATEEGDQEQDPEPEEEAAVEGEEEEEGAATAAAAPGHSAVPPPPPQLPPLPPLPRPLSERITREEVEGESLDLCLQQLYKYNCPSFLAAALARATSDEVLQSDLSAHYIPKETDGTEGTVEIETVKLARSVFSKLHEICCSWVKDFPLRRRPQLYYETSIHAIKNMRRKMEDKHVCIPDFNMLFNLE</original>
    <variation>MKSFRVIFLHIISQRKRMAQKGLW</variation>
    <location>
        <begin position="1"/>
        <end position="261"/>
    </location>
</feature>
<feature type="sequence variant" id="VAR_063769" evidence="6 7 8 9 13 14 15">
    <original>E</original>
    <variation>EPE</variation>
    <location>
        <position position="44"/>
    </location>
</feature>
<feature type="sequence variant" id="VAR_036518" description="In a breast cancer sample; somatic mutation." evidence="12">
    <original>L</original>
    <variation>S</variation>
    <location>
        <position position="222"/>
    </location>
</feature>
<feature type="sequence variant" id="VAR_036519" description="In a breast cancer sample; somatic mutation." evidence="12">
    <original>R</original>
    <variation>G</variation>
    <location>
        <position position="311"/>
    </location>
</feature>
<feature type="sequence conflict" description="In Ref. 9; DA497512." evidence="17" ref="9">
    <original>L</original>
    <variation>P</variation>
    <location>
        <position position="53"/>
    </location>
</feature>
<feature type="sequence conflict" description="In Ref. 2; AAF70325." evidence="17" ref="2">
    <original>V</original>
    <variation>I</variation>
    <location>
        <position position="385"/>
    </location>
</feature>